<feature type="chain" id="PRO_0000331411" description="Caveolae-associated protein 3">
    <location>
        <begin position="1"/>
        <end position="260"/>
    </location>
</feature>
<feature type="region of interest" description="Interaction with CAVIN1" evidence="1">
    <location>
        <begin position="1"/>
        <end position="84"/>
    </location>
</feature>
<feature type="region of interest" description="Leucine-zipper" evidence="2">
    <location>
        <begin position="20"/>
        <end position="78"/>
    </location>
</feature>
<feature type="region of interest" description="Interaction with CAV1" evidence="1">
    <location>
        <begin position="135"/>
        <end position="201"/>
    </location>
</feature>
<feature type="region of interest" description="Disordered" evidence="3">
    <location>
        <begin position="140"/>
        <end position="260"/>
    </location>
</feature>
<feature type="compositionally biased region" description="Acidic residues" evidence="3">
    <location>
        <begin position="157"/>
        <end position="168"/>
    </location>
</feature>
<feature type="compositionally biased region" description="Pro residues" evidence="3">
    <location>
        <begin position="201"/>
        <end position="210"/>
    </location>
</feature>
<feature type="modified residue" description="Phosphoserine" evidence="2">
    <location>
        <position position="62"/>
    </location>
</feature>
<feature type="modified residue" description="Phosphoserine" evidence="2">
    <location>
        <position position="70"/>
    </location>
</feature>
<feature type="modified residue" description="Phosphoserine" evidence="2">
    <location>
        <position position="162"/>
    </location>
</feature>
<feature type="modified residue" description="Phosphoserine" evidence="2">
    <location>
        <position position="163"/>
    </location>
</feature>
<feature type="modified residue" description="Phosphoserine" evidence="1">
    <location>
        <position position="171"/>
    </location>
</feature>
<feature type="cross-link" description="Glycyl lysine isopeptide (Lys-Gly) (interchain with G-Cter in SUMO2)" evidence="2">
    <location>
        <position position="128"/>
    </location>
</feature>
<accession>A4FV37</accession>
<protein>
    <recommendedName>
        <fullName>Caveolae-associated protein 3</fullName>
    </recommendedName>
    <alternativeName>
        <fullName>Cavin-3</fullName>
    </alternativeName>
    <alternativeName>
        <fullName>Protein kinase C delta-binding protein</fullName>
    </alternativeName>
</protein>
<sequence>MGESALESGPVPGAPAGGPVHAVTVVTLLEKLATMLETLRERQGGLAQRQGGLAGSVRRIQSNLGALSRSHDTTSNTLAQLLAKAERVGSHADAAQERAVRRAAQVQRLEANHGLLVARGKLHVLLFKEEAEIPAKAFQKAPEPLGPVELGPQLPEAEAEESSDEEEPVESRARRLRRTGLEKVQSLRRALSGRKGHAAPTPTPVKPPRLGPGRSAEGQWEAQPALESKLEPEPPQDTEEDPGRPGAAEAAAVLQVESAA</sequence>
<comment type="function">
    <text evidence="1 2">Regulates the traffic and/or budding of caveolae. Plays a role in caveola formation in a tissue-specific manner. Required for the formation of caveolae in smooth muscle but not in the lung and heart endothelial cells. Regulates the equilibrium between cell surface-associated and cell surface-dissociated caveolae by promoting the rapid release of caveolae from the cell surface. Plays a role in the regulation of the circadian clock. Modulates the period length and phase of circadian gene expression and also regulates expression and interaction of the core clock components PER1/2 and CRY1/2.</text>
</comment>
<comment type="subunit">
    <text evidence="1 2">Component of the CAVIN complex composed of CAVIN1, CAVIN2, CAVIN3 and CAVIN4. Interacts with PRKCD and with phosphatidylserine. Phosphatidylserine may form a bridge between PKC and PKC-binding partners and stabilize the binding. Interacts with PER2. Interacts with CAVIN1 and EPS15L1. Interacts (via leucine-zipper domain) with CAV1 in a cholesterol-sensitive manner.</text>
</comment>
<comment type="subcellular location">
    <subcellularLocation>
        <location evidence="1">Cytoplasm</location>
    </subcellularLocation>
    <subcellularLocation>
        <location evidence="1">Membrane</location>
        <location evidence="1">Caveola</location>
    </subcellularLocation>
    <subcellularLocation>
        <location evidence="1">Cytoplasm</location>
        <location evidence="1">Cytosol</location>
    </subcellularLocation>
    <text evidence="1">Localizes in the caveolae in a caveolin-dependent manner.</text>
</comment>
<comment type="domain">
    <text evidence="2">The leucine-zipper domain is essential for its localization in the caveolae and for its interaction with CAV1 and EPS15L1.</text>
</comment>
<comment type="PTM">
    <text evidence="1">In vitro, phosphorylated by PRKCD.</text>
</comment>
<comment type="similarity">
    <text evidence="4">Belongs to the CAVIN family.</text>
</comment>
<name>CAVN3_BOVIN</name>
<evidence type="ECO:0000250" key="1">
    <source>
        <dbReference type="UniProtKB" id="Q91VJ2"/>
    </source>
</evidence>
<evidence type="ECO:0000250" key="2">
    <source>
        <dbReference type="UniProtKB" id="Q969G5"/>
    </source>
</evidence>
<evidence type="ECO:0000256" key="3">
    <source>
        <dbReference type="SAM" id="MobiDB-lite"/>
    </source>
</evidence>
<evidence type="ECO:0000305" key="4"/>
<proteinExistence type="evidence at transcript level"/>
<dbReference type="EMBL" id="BC123692">
    <property type="protein sequence ID" value="AAI23693.1"/>
    <property type="molecule type" value="mRNA"/>
</dbReference>
<dbReference type="RefSeq" id="NP_001076870.1">
    <property type="nucleotide sequence ID" value="NM_001083401.1"/>
</dbReference>
<dbReference type="SMR" id="A4FV37"/>
<dbReference type="FunCoup" id="A4FV37">
    <property type="interactions" value="161"/>
</dbReference>
<dbReference type="STRING" id="9913.ENSBTAP00000026323"/>
<dbReference type="PaxDb" id="9913-ENSBTAP00000026323"/>
<dbReference type="PeptideAtlas" id="A4FV37"/>
<dbReference type="GeneID" id="510203"/>
<dbReference type="KEGG" id="bta:510203"/>
<dbReference type="CTD" id="112464"/>
<dbReference type="VEuPathDB" id="HostDB:ENSBTAG00000019754"/>
<dbReference type="eggNOG" id="ENOG502QQCA">
    <property type="taxonomic scope" value="Eukaryota"/>
</dbReference>
<dbReference type="HOGENOM" id="CLU_093512_0_0_1"/>
<dbReference type="InParanoid" id="A4FV37"/>
<dbReference type="OMA" id="DLKCFAV"/>
<dbReference type="OrthoDB" id="9451657at2759"/>
<dbReference type="TreeFam" id="TF331031"/>
<dbReference type="Proteomes" id="UP000009136">
    <property type="component" value="Chromosome 15"/>
</dbReference>
<dbReference type="Bgee" id="ENSBTAG00000019754">
    <property type="expression patterns" value="Expressed in myometrium and 106 other cell types or tissues"/>
</dbReference>
<dbReference type="GO" id="GO:0005901">
    <property type="term" value="C:caveola"/>
    <property type="evidence" value="ECO:0000250"/>
    <property type="project" value="UniProtKB"/>
</dbReference>
<dbReference type="GO" id="GO:0005737">
    <property type="term" value="C:cytoplasm"/>
    <property type="evidence" value="ECO:0000250"/>
    <property type="project" value="UniProtKB"/>
</dbReference>
<dbReference type="GO" id="GO:0005829">
    <property type="term" value="C:cytosol"/>
    <property type="evidence" value="ECO:0007669"/>
    <property type="project" value="UniProtKB-SubCell"/>
</dbReference>
<dbReference type="GO" id="GO:0032991">
    <property type="term" value="C:protein-containing complex"/>
    <property type="evidence" value="ECO:0007669"/>
    <property type="project" value="Ensembl"/>
</dbReference>
<dbReference type="GO" id="GO:0005080">
    <property type="term" value="F:protein kinase C binding"/>
    <property type="evidence" value="ECO:0000318"/>
    <property type="project" value="GO_Central"/>
</dbReference>
<dbReference type="GO" id="GO:0032922">
    <property type="term" value="P:circadian regulation of gene expression"/>
    <property type="evidence" value="ECO:0000250"/>
    <property type="project" value="UniProtKB"/>
</dbReference>
<dbReference type="GO" id="GO:0030866">
    <property type="term" value="P:cortical actin cytoskeleton organization"/>
    <property type="evidence" value="ECO:0007669"/>
    <property type="project" value="Ensembl"/>
</dbReference>
<dbReference type="GO" id="GO:1901003">
    <property type="term" value="P:negative regulation of fermentation"/>
    <property type="evidence" value="ECO:0007669"/>
    <property type="project" value="Ensembl"/>
</dbReference>
<dbReference type="GO" id="GO:0051898">
    <property type="term" value="P:negative regulation of phosphatidylinositol 3-kinase/protein kinase B signal transduction"/>
    <property type="evidence" value="ECO:0007669"/>
    <property type="project" value="Ensembl"/>
</dbReference>
<dbReference type="GO" id="GO:0070374">
    <property type="term" value="P:positive regulation of ERK1 and ERK2 cascade"/>
    <property type="evidence" value="ECO:0007669"/>
    <property type="project" value="Ensembl"/>
</dbReference>
<dbReference type="InterPro" id="IPR026752">
    <property type="entry name" value="Cavin_fam"/>
</dbReference>
<dbReference type="PANTHER" id="PTHR15240:SF2">
    <property type="entry name" value="CAVEOLAE-ASSOCIATED PROTEIN 3"/>
    <property type="match status" value="1"/>
</dbReference>
<dbReference type="PANTHER" id="PTHR15240">
    <property type="entry name" value="CAVIN"/>
    <property type="match status" value="1"/>
</dbReference>
<dbReference type="Pfam" id="PF15237">
    <property type="entry name" value="PTRF_SDPR"/>
    <property type="match status" value="1"/>
</dbReference>
<reference key="1">
    <citation type="submission" date="2006-09" db="EMBL/GenBank/DDBJ databases">
        <authorList>
            <consortium name="NIH - Mammalian Gene Collection (MGC) project"/>
        </authorList>
    </citation>
    <scope>NUCLEOTIDE SEQUENCE [LARGE SCALE MRNA]</scope>
    <source>
        <strain>Hereford</strain>
        <tissue>Hippocampus</tissue>
    </source>
</reference>
<organism>
    <name type="scientific">Bos taurus</name>
    <name type="common">Bovine</name>
    <dbReference type="NCBI Taxonomy" id="9913"/>
    <lineage>
        <taxon>Eukaryota</taxon>
        <taxon>Metazoa</taxon>
        <taxon>Chordata</taxon>
        <taxon>Craniata</taxon>
        <taxon>Vertebrata</taxon>
        <taxon>Euteleostomi</taxon>
        <taxon>Mammalia</taxon>
        <taxon>Eutheria</taxon>
        <taxon>Laurasiatheria</taxon>
        <taxon>Artiodactyla</taxon>
        <taxon>Ruminantia</taxon>
        <taxon>Pecora</taxon>
        <taxon>Bovidae</taxon>
        <taxon>Bovinae</taxon>
        <taxon>Bos</taxon>
    </lineage>
</organism>
<keyword id="KW-0090">Biological rhythms</keyword>
<keyword id="KW-0963">Cytoplasm</keyword>
<keyword id="KW-1017">Isopeptide bond</keyword>
<keyword id="KW-0472">Membrane</keyword>
<keyword id="KW-0597">Phosphoprotein</keyword>
<keyword id="KW-1185">Reference proteome</keyword>
<keyword id="KW-0043">Tumor suppressor</keyword>
<keyword id="KW-0832">Ubl conjugation</keyword>
<gene>
    <name type="primary">CAVIN3</name>
    <name type="synonym">PRKCDBP</name>
</gene>